<sequence>MLDTNYYDRLQIGLATADQIRAWSHGEVKKPETINYRTLKPERDGLFCEKIFGPTRDWECYCGKYKRVRFKGIICERCGVEVTRSNVRRERMGHIELVAPVTHIWYFKGVPSRLGYLLDIAPKDLEKVIYFAAYMITAVDDEARHRDLPSLEAKVQTERSRLEQRRDSELEARRVKLEEDMAQLEADGAKADVRRKVKDGAEKELKHIETRAQRQIDRLDAVWDRFKNLKVQDLEGDEILYREMKSRFGKYFEGSMGAEAVKRRLHDFDLKSESEKLREIIKTGRGQKKTRALKRLKVVQAFLDSGNSPEAMVLDCVPVIPPDLRPMVQLDGGRFATSDLNDLYRRVINRNNRLKRLVDLGAPEIIVNNEKRMLQEAVDSLFDNGRRGRPVSGPGNRPLKSLSDMLKGKQGRFRQNLLGKRVDYSGRSVIVVGPQLKMHECGLPKTMALELFKPFVMKRLADLEHAQNVKSAKRMVERQRPVVWDVLEEVIKEHPVLLNRAPTLHRLGIQAFEPQLIEGKAIQLHPLVCSAFNADFDGDQMAVHLPLSPEAQAEARVLMLSTNNILKPADGRPVALPSHEMIIGAYYLTMALDGLKGEGRAFTSLAEAIMAHDLGELEIGAKIKLRLKGIVPPHDETVRADGSVILDTTLGQALFNEVLPDDYPYVDFLVGKKQIGKIVNDLSERMTQLEVAHVLDNLKDIGYKWGSLSGVTVSIGDVQTPPTKPEILAGYETRAAKVDREYDRGAVTEEERRQDLIQIWTEATAELTAAMEANFTQTNPIHMMVDSGARGSMTQMRQIAAMRGLVADPKGDIIPRPIKSNFREGLTVLEYFISTHGGRKGQADTALRTADSGYLTRRLVDVSQDVIVRENDCGTTRGMPKTIAVDDGNGNLVRVEGLDTAVYARCLAADAVDANGNVVVEANSDLGDEEISRLIAAGISQIKVRSVLTCTAAQGCCARCYGRSLSTGHLVDVGEAVGIIAAQSIGEPGTQLTMRTFHTGGVAGDDITQGLPRVVELFEARSPKGKSPLAEAAGVIRIDESDNRRKLVLVRDDGEDDVEYVVPRRARLEFDLDGTHRVIRDGVRVAAGEQLMGGTADPQDVLRISGVRRVQEYLVKEVQKVYNTQGAGIHEKHIEIVIRQMLRRITVIESGDTQMMPGELVDRGAYEAANRKAVAEGGRPAEGRPVLMGITKASLATESWLSAASFQETTKVLTDAAINGKTDTLVGLKENVILGKLIPAGTGLEVYRNMRVEPTAEAKAAAFTMNYDPFDYDFGSGSGEAVPLDDLDLGDLG</sequence>
<accession>Q6A6K7</accession>
<reference key="1">
    <citation type="journal article" date="2004" name="Science">
        <title>The complete genome sequence of Propionibacterium acnes, a commensal of human skin.</title>
        <authorList>
            <person name="Brueggemann H."/>
            <person name="Henne A."/>
            <person name="Hoster F."/>
            <person name="Liesegang H."/>
            <person name="Wiezer A."/>
            <person name="Strittmatter A."/>
            <person name="Hujer S."/>
            <person name="Duerre P."/>
            <person name="Gottschalk G."/>
        </authorList>
    </citation>
    <scope>NUCLEOTIDE SEQUENCE [LARGE SCALE GENOMIC DNA]</scope>
    <source>
        <strain>DSM 16379 / KPA171202</strain>
    </source>
</reference>
<proteinExistence type="inferred from homology"/>
<organism>
    <name type="scientific">Cutibacterium acnes (strain DSM 16379 / KPA171202)</name>
    <name type="common">Propionibacterium acnes</name>
    <dbReference type="NCBI Taxonomy" id="267747"/>
    <lineage>
        <taxon>Bacteria</taxon>
        <taxon>Bacillati</taxon>
        <taxon>Actinomycetota</taxon>
        <taxon>Actinomycetes</taxon>
        <taxon>Propionibacteriales</taxon>
        <taxon>Propionibacteriaceae</taxon>
        <taxon>Cutibacterium</taxon>
    </lineage>
</organism>
<name>RPOC_CUTAK</name>
<comment type="function">
    <text evidence="1">DNA-dependent RNA polymerase catalyzes the transcription of DNA into RNA using the four ribonucleoside triphosphates as substrates.</text>
</comment>
<comment type="catalytic activity">
    <reaction evidence="1">
        <text>RNA(n) + a ribonucleoside 5'-triphosphate = RNA(n+1) + diphosphate</text>
        <dbReference type="Rhea" id="RHEA:21248"/>
        <dbReference type="Rhea" id="RHEA-COMP:14527"/>
        <dbReference type="Rhea" id="RHEA-COMP:17342"/>
        <dbReference type="ChEBI" id="CHEBI:33019"/>
        <dbReference type="ChEBI" id="CHEBI:61557"/>
        <dbReference type="ChEBI" id="CHEBI:140395"/>
        <dbReference type="EC" id="2.7.7.6"/>
    </reaction>
</comment>
<comment type="cofactor">
    <cofactor evidence="1">
        <name>Mg(2+)</name>
        <dbReference type="ChEBI" id="CHEBI:18420"/>
    </cofactor>
    <text evidence="1">Binds 1 Mg(2+) ion per subunit.</text>
</comment>
<comment type="cofactor">
    <cofactor evidence="1">
        <name>Zn(2+)</name>
        <dbReference type="ChEBI" id="CHEBI:29105"/>
    </cofactor>
    <text evidence="1">Binds 2 Zn(2+) ions per subunit.</text>
</comment>
<comment type="subunit">
    <text evidence="1">The RNAP catalytic core consists of 2 alpha, 1 beta, 1 beta' and 1 omega subunit. When a sigma factor is associated with the core the holoenzyme is formed, which can initiate transcription.</text>
</comment>
<comment type="similarity">
    <text evidence="1">Belongs to the RNA polymerase beta' chain family.</text>
</comment>
<feature type="chain" id="PRO_0000225563" description="DNA-directed RNA polymerase subunit beta'">
    <location>
        <begin position="1"/>
        <end position="1293"/>
    </location>
</feature>
<feature type="binding site" evidence="1">
    <location>
        <position position="60"/>
    </location>
    <ligand>
        <name>Zn(2+)</name>
        <dbReference type="ChEBI" id="CHEBI:29105"/>
        <label>1</label>
    </ligand>
</feature>
<feature type="binding site" evidence="1">
    <location>
        <position position="62"/>
    </location>
    <ligand>
        <name>Zn(2+)</name>
        <dbReference type="ChEBI" id="CHEBI:29105"/>
        <label>1</label>
    </ligand>
</feature>
<feature type="binding site" evidence="1">
    <location>
        <position position="75"/>
    </location>
    <ligand>
        <name>Zn(2+)</name>
        <dbReference type="ChEBI" id="CHEBI:29105"/>
        <label>1</label>
    </ligand>
</feature>
<feature type="binding site" evidence="1">
    <location>
        <position position="78"/>
    </location>
    <ligand>
        <name>Zn(2+)</name>
        <dbReference type="ChEBI" id="CHEBI:29105"/>
        <label>1</label>
    </ligand>
</feature>
<feature type="binding site" evidence="1">
    <location>
        <position position="535"/>
    </location>
    <ligand>
        <name>Mg(2+)</name>
        <dbReference type="ChEBI" id="CHEBI:18420"/>
    </ligand>
</feature>
<feature type="binding site" evidence="1">
    <location>
        <position position="537"/>
    </location>
    <ligand>
        <name>Mg(2+)</name>
        <dbReference type="ChEBI" id="CHEBI:18420"/>
    </ligand>
</feature>
<feature type="binding site" evidence="1">
    <location>
        <position position="539"/>
    </location>
    <ligand>
        <name>Mg(2+)</name>
        <dbReference type="ChEBI" id="CHEBI:18420"/>
    </ligand>
</feature>
<feature type="binding site" evidence="1">
    <location>
        <position position="873"/>
    </location>
    <ligand>
        <name>Zn(2+)</name>
        <dbReference type="ChEBI" id="CHEBI:29105"/>
        <label>2</label>
    </ligand>
</feature>
<feature type="binding site" evidence="1">
    <location>
        <position position="950"/>
    </location>
    <ligand>
        <name>Zn(2+)</name>
        <dbReference type="ChEBI" id="CHEBI:29105"/>
        <label>2</label>
    </ligand>
</feature>
<feature type="binding site" evidence="1">
    <location>
        <position position="957"/>
    </location>
    <ligand>
        <name>Zn(2+)</name>
        <dbReference type="ChEBI" id="CHEBI:29105"/>
        <label>2</label>
    </ligand>
</feature>
<feature type="binding site" evidence="1">
    <location>
        <position position="960"/>
    </location>
    <ligand>
        <name>Zn(2+)</name>
        <dbReference type="ChEBI" id="CHEBI:29105"/>
        <label>2</label>
    </ligand>
</feature>
<evidence type="ECO:0000255" key="1">
    <source>
        <dbReference type="HAMAP-Rule" id="MF_01322"/>
    </source>
</evidence>
<gene>
    <name evidence="1" type="primary">rpoC</name>
    <name type="ordered locus">PPA1883</name>
</gene>
<keyword id="KW-0240">DNA-directed RNA polymerase</keyword>
<keyword id="KW-0460">Magnesium</keyword>
<keyword id="KW-0479">Metal-binding</keyword>
<keyword id="KW-0548">Nucleotidyltransferase</keyword>
<keyword id="KW-0804">Transcription</keyword>
<keyword id="KW-0808">Transferase</keyword>
<keyword id="KW-0862">Zinc</keyword>
<protein>
    <recommendedName>
        <fullName evidence="1">DNA-directed RNA polymerase subunit beta'</fullName>
        <shortName evidence="1">RNAP subunit beta'</shortName>
        <ecNumber evidence="1">2.7.7.6</ecNumber>
    </recommendedName>
    <alternativeName>
        <fullName evidence="1">RNA polymerase subunit beta'</fullName>
    </alternativeName>
    <alternativeName>
        <fullName evidence="1">Transcriptase subunit beta'</fullName>
    </alternativeName>
</protein>
<dbReference type="EC" id="2.7.7.6" evidence="1"/>
<dbReference type="EMBL" id="AE017283">
    <property type="protein sequence ID" value="AAT83606.1"/>
    <property type="molecule type" value="Genomic_DNA"/>
</dbReference>
<dbReference type="RefSeq" id="WP_011183941.1">
    <property type="nucleotide sequence ID" value="NZ_CP025935.1"/>
</dbReference>
<dbReference type="SMR" id="Q6A6K7"/>
<dbReference type="EnsemblBacteria" id="AAT83606">
    <property type="protein sequence ID" value="AAT83606"/>
    <property type="gene ID" value="PPA1883"/>
</dbReference>
<dbReference type="KEGG" id="pac:PPA1883"/>
<dbReference type="PATRIC" id="fig|267747.3.peg.1938"/>
<dbReference type="eggNOG" id="COG0086">
    <property type="taxonomic scope" value="Bacteria"/>
</dbReference>
<dbReference type="HOGENOM" id="CLU_000524_3_1_11"/>
<dbReference type="Proteomes" id="UP000000603">
    <property type="component" value="Chromosome"/>
</dbReference>
<dbReference type="GO" id="GO:0000428">
    <property type="term" value="C:DNA-directed RNA polymerase complex"/>
    <property type="evidence" value="ECO:0007669"/>
    <property type="project" value="UniProtKB-KW"/>
</dbReference>
<dbReference type="GO" id="GO:0003677">
    <property type="term" value="F:DNA binding"/>
    <property type="evidence" value="ECO:0007669"/>
    <property type="project" value="UniProtKB-UniRule"/>
</dbReference>
<dbReference type="GO" id="GO:0003899">
    <property type="term" value="F:DNA-directed RNA polymerase activity"/>
    <property type="evidence" value="ECO:0007669"/>
    <property type="project" value="UniProtKB-UniRule"/>
</dbReference>
<dbReference type="GO" id="GO:0000287">
    <property type="term" value="F:magnesium ion binding"/>
    <property type="evidence" value="ECO:0007669"/>
    <property type="project" value="UniProtKB-UniRule"/>
</dbReference>
<dbReference type="GO" id="GO:0008270">
    <property type="term" value="F:zinc ion binding"/>
    <property type="evidence" value="ECO:0007669"/>
    <property type="project" value="UniProtKB-UniRule"/>
</dbReference>
<dbReference type="GO" id="GO:0006351">
    <property type="term" value="P:DNA-templated transcription"/>
    <property type="evidence" value="ECO:0007669"/>
    <property type="project" value="UniProtKB-UniRule"/>
</dbReference>
<dbReference type="CDD" id="cd02655">
    <property type="entry name" value="RNAP_beta'_C"/>
    <property type="match status" value="1"/>
</dbReference>
<dbReference type="CDD" id="cd01609">
    <property type="entry name" value="RNAP_beta'_N"/>
    <property type="match status" value="1"/>
</dbReference>
<dbReference type="FunFam" id="1.10.150.390:FF:000002">
    <property type="entry name" value="DNA-directed RNA polymerase subunit beta"/>
    <property type="match status" value="1"/>
</dbReference>
<dbReference type="FunFam" id="1.10.40.90:FF:000001">
    <property type="entry name" value="DNA-directed RNA polymerase subunit beta"/>
    <property type="match status" value="1"/>
</dbReference>
<dbReference type="FunFam" id="4.10.860.120:FF:000001">
    <property type="entry name" value="DNA-directed RNA polymerase subunit beta"/>
    <property type="match status" value="1"/>
</dbReference>
<dbReference type="Gene3D" id="1.10.132.30">
    <property type="match status" value="1"/>
</dbReference>
<dbReference type="Gene3D" id="1.10.150.390">
    <property type="match status" value="1"/>
</dbReference>
<dbReference type="Gene3D" id="1.10.1790.20">
    <property type="match status" value="1"/>
</dbReference>
<dbReference type="Gene3D" id="1.10.40.90">
    <property type="match status" value="1"/>
</dbReference>
<dbReference type="Gene3D" id="2.40.40.20">
    <property type="match status" value="1"/>
</dbReference>
<dbReference type="Gene3D" id="2.40.50.100">
    <property type="match status" value="1"/>
</dbReference>
<dbReference type="Gene3D" id="4.10.860.120">
    <property type="entry name" value="RNA polymerase II, clamp domain"/>
    <property type="match status" value="1"/>
</dbReference>
<dbReference type="Gene3D" id="1.10.274.100">
    <property type="entry name" value="RNA polymerase Rpb1, domain 3"/>
    <property type="match status" value="1"/>
</dbReference>
<dbReference type="HAMAP" id="MF_01322">
    <property type="entry name" value="RNApol_bact_RpoC"/>
    <property type="match status" value="1"/>
</dbReference>
<dbReference type="InterPro" id="IPR045867">
    <property type="entry name" value="DNA-dir_RpoC_beta_prime"/>
</dbReference>
<dbReference type="InterPro" id="IPR012754">
    <property type="entry name" value="DNA-dir_RpoC_beta_prime_bact"/>
</dbReference>
<dbReference type="InterPro" id="IPR000722">
    <property type="entry name" value="RNA_pol_asu"/>
</dbReference>
<dbReference type="InterPro" id="IPR006592">
    <property type="entry name" value="RNA_pol_N"/>
</dbReference>
<dbReference type="InterPro" id="IPR007080">
    <property type="entry name" value="RNA_pol_Rpb1_1"/>
</dbReference>
<dbReference type="InterPro" id="IPR007066">
    <property type="entry name" value="RNA_pol_Rpb1_3"/>
</dbReference>
<dbReference type="InterPro" id="IPR042102">
    <property type="entry name" value="RNA_pol_Rpb1_3_sf"/>
</dbReference>
<dbReference type="InterPro" id="IPR007083">
    <property type="entry name" value="RNA_pol_Rpb1_4"/>
</dbReference>
<dbReference type="InterPro" id="IPR007081">
    <property type="entry name" value="RNA_pol_Rpb1_5"/>
</dbReference>
<dbReference type="InterPro" id="IPR044893">
    <property type="entry name" value="RNA_pol_Rpb1_clamp_domain"/>
</dbReference>
<dbReference type="InterPro" id="IPR038120">
    <property type="entry name" value="Rpb1_funnel_sf"/>
</dbReference>
<dbReference type="NCBIfam" id="NF011498">
    <property type="entry name" value="PRK14906.1"/>
    <property type="match status" value="1"/>
</dbReference>
<dbReference type="NCBIfam" id="TIGR02386">
    <property type="entry name" value="rpoC_TIGR"/>
    <property type="match status" value="1"/>
</dbReference>
<dbReference type="PANTHER" id="PTHR19376">
    <property type="entry name" value="DNA-DIRECTED RNA POLYMERASE"/>
    <property type="match status" value="1"/>
</dbReference>
<dbReference type="PANTHER" id="PTHR19376:SF54">
    <property type="entry name" value="DNA-DIRECTED RNA POLYMERASE SUBUNIT BETA"/>
    <property type="match status" value="1"/>
</dbReference>
<dbReference type="Pfam" id="PF04997">
    <property type="entry name" value="RNA_pol_Rpb1_1"/>
    <property type="match status" value="1"/>
</dbReference>
<dbReference type="Pfam" id="PF00623">
    <property type="entry name" value="RNA_pol_Rpb1_2"/>
    <property type="match status" value="2"/>
</dbReference>
<dbReference type="Pfam" id="PF04983">
    <property type="entry name" value="RNA_pol_Rpb1_3"/>
    <property type="match status" value="1"/>
</dbReference>
<dbReference type="Pfam" id="PF05000">
    <property type="entry name" value="RNA_pol_Rpb1_4"/>
    <property type="match status" value="1"/>
</dbReference>
<dbReference type="Pfam" id="PF04998">
    <property type="entry name" value="RNA_pol_Rpb1_5"/>
    <property type="match status" value="1"/>
</dbReference>
<dbReference type="SMART" id="SM00663">
    <property type="entry name" value="RPOLA_N"/>
    <property type="match status" value="1"/>
</dbReference>
<dbReference type="SUPFAM" id="SSF64484">
    <property type="entry name" value="beta and beta-prime subunits of DNA dependent RNA-polymerase"/>
    <property type="match status" value="1"/>
</dbReference>